<accession>P02659</accession>
<accession>Q90882</accession>
<keyword id="KW-0903">Direct protein sequencing</keyword>
<keyword id="KW-1015">Disulfide bond</keyword>
<keyword id="KW-1185">Reference proteome</keyword>
<keyword id="KW-0732">Signal</keyword>
<keyword id="KW-0758">Storage protein</keyword>
<keyword id="KW-0850">VLDL</keyword>
<evidence type="ECO:0000269" key="1">
    <source>
    </source>
</evidence>
<evidence type="ECO:0000269" key="2">
    <source>
    </source>
</evidence>
<evidence type="ECO:0000269" key="3">
    <source>
    </source>
</evidence>
<evidence type="ECO:0000305" key="4"/>
<dbReference type="EMBL" id="V00449">
    <property type="protein sequence ID" value="CAA23727.1"/>
    <property type="molecule type" value="mRNA"/>
</dbReference>
<dbReference type="EMBL" id="J00810">
    <property type="protein sequence ID" value="AAA48596.1"/>
    <property type="molecule type" value="Genomic_DNA"/>
</dbReference>
<dbReference type="EMBL" id="M25774">
    <property type="protein sequence ID" value="AAA48938.1"/>
    <property type="molecule type" value="mRNA"/>
</dbReference>
<dbReference type="PIR" id="A93464">
    <property type="entry name" value="VLCH1"/>
</dbReference>
<dbReference type="PIR" id="I50374">
    <property type="entry name" value="I50374"/>
</dbReference>
<dbReference type="RefSeq" id="NP_990814.2">
    <property type="nucleotide sequence ID" value="NM_205483.3"/>
</dbReference>
<dbReference type="RefSeq" id="XP_015151420.1">
    <property type="nucleotide sequence ID" value="XM_015295934.3"/>
</dbReference>
<dbReference type="RefSeq" id="XP_046762920.1">
    <property type="nucleotide sequence ID" value="XM_046906964.1"/>
</dbReference>
<dbReference type="SMR" id="P02659"/>
<dbReference type="STRING" id="9031.ENSGALP00000024373"/>
<dbReference type="Allergome" id="2740">
    <property type="allergen name" value="Gal d Apo I"/>
</dbReference>
<dbReference type="PaxDb" id="9031-ENSGALP00000024373"/>
<dbReference type="Ensembl" id="ENSGALT00010010178.1">
    <property type="protein sequence ID" value="ENSGALP00010005947.1"/>
    <property type="gene ID" value="ENSGALG00010004359.1"/>
</dbReference>
<dbReference type="GeneID" id="396476"/>
<dbReference type="KEGG" id="gga:396476"/>
<dbReference type="CTD" id="396476"/>
<dbReference type="VEuPathDB" id="HostDB:geneid_396476"/>
<dbReference type="eggNOG" id="ENOG502SRWC">
    <property type="taxonomic scope" value="Eukaryota"/>
</dbReference>
<dbReference type="GeneTree" id="ENSGT00530000066877"/>
<dbReference type="HOGENOM" id="CLU_176392_0_0_1"/>
<dbReference type="InParanoid" id="P02659"/>
<dbReference type="OMA" id="SIMFEQL"/>
<dbReference type="OrthoDB" id="9362862at2759"/>
<dbReference type="PhylomeDB" id="P02659"/>
<dbReference type="PRO" id="PR:P02659"/>
<dbReference type="Proteomes" id="UP000000539">
    <property type="component" value="Chromosome 1"/>
</dbReference>
<dbReference type="Bgee" id="ENSGALG00000015134">
    <property type="expression patterns" value="Expressed in liver and 4 other cell types or tissues"/>
</dbReference>
<dbReference type="GO" id="GO:0042627">
    <property type="term" value="C:chylomicron"/>
    <property type="evidence" value="ECO:0007669"/>
    <property type="project" value="InterPro"/>
</dbReference>
<dbReference type="GO" id="GO:0034361">
    <property type="term" value="C:very-low-density lipoprotein particle"/>
    <property type="evidence" value="ECO:0007669"/>
    <property type="project" value="UniProtKB-KW"/>
</dbReference>
<dbReference type="GO" id="GO:0004857">
    <property type="term" value="F:enzyme inhibitor activity"/>
    <property type="evidence" value="ECO:0007669"/>
    <property type="project" value="InterPro"/>
</dbReference>
<dbReference type="GO" id="GO:0045735">
    <property type="term" value="F:nutrient reservoir activity"/>
    <property type="evidence" value="ECO:0007669"/>
    <property type="project" value="UniProtKB-KW"/>
</dbReference>
<dbReference type="GO" id="GO:0006629">
    <property type="term" value="P:lipid metabolic process"/>
    <property type="evidence" value="ECO:0007669"/>
    <property type="project" value="InterPro"/>
</dbReference>
<dbReference type="InterPro" id="IPR008404">
    <property type="entry name" value="Apo-VLDL-II"/>
</dbReference>
<dbReference type="Pfam" id="PF05418">
    <property type="entry name" value="Apo-VLDL-II"/>
    <property type="match status" value="1"/>
</dbReference>
<dbReference type="PIRSF" id="PIRSF002369">
    <property type="entry name" value="Apo-VLDL-II"/>
    <property type="match status" value="1"/>
</dbReference>
<protein>
    <recommendedName>
        <fullName>Apovitellenin-1</fullName>
    </recommendedName>
    <alternativeName>
        <fullName>Apo-VLDL-II</fullName>
        <shortName>Apo-II</shortName>
    </alternativeName>
    <alternativeName>
        <fullName>Apovitellenin I</fullName>
    </alternativeName>
    <alternativeName>
        <fullName>Very low density lipoprotein II</fullName>
    </alternativeName>
</protein>
<comment type="function">
    <text>Protein component of the very low density lipoprotein (VLDL) of egg-laying females. Potent lipoprotein lipase inhibitor, preventing the loss of triglycerides from VLDL on their way from the liver to the growing oocytes.</text>
</comment>
<comment type="subunit">
    <text>Homodimer; disulfide-linked.</text>
</comment>
<comment type="tissue specificity">
    <text>Produced by the liver, secreted into the blood and then sequestred by receptor mediated endocytosis into growing oocytes.</text>
</comment>
<comment type="developmental stage">
    <text>ApoII mRNA induction by estrogen in kidney at day 11 is at 10% of the level in the liver but estrogen-responsiveness decreases later in development and is low in the adult.</text>
</comment>
<comment type="induction">
    <text>By steroids (estrogen).</text>
</comment>
<comment type="similarity">
    <text evidence="4">Belongs to the apovitellenin family.</text>
</comment>
<proteinExistence type="evidence at protein level"/>
<reference key="1">
    <citation type="journal article" date="1983" name="Nucleic Acids Res.">
        <title>The nucleotide sequence of the chicken apo very low density lipoprotein II gene.</title>
        <authorList>
            <person name="van Het Schip A.D."/>
            <person name="Meijlink F.C.P.W."/>
            <person name="Strijker R."/>
            <person name="Gruber M."/>
            <person name="van Vliet A.J."/>
            <person name="van de Klundert J.A.M."/>
            <person name="Ab G."/>
        </authorList>
    </citation>
    <scope>NUCLEOTIDE SEQUENCE [GENOMIC DNA]</scope>
</reference>
<reference key="2">
    <citation type="journal article" date="1981" name="Nucleic Acids Res.">
        <title>The nucleotide sequence of the very low density lipoprotein II mRNA from chicken.</title>
        <authorList>
            <person name="Wieringa B."/>
            <person name="Ab G."/>
            <person name="Gruber M."/>
        </authorList>
    </citation>
    <scope>NUCLEOTIDE SEQUENCE [GENOMIC DNA]</scope>
</reference>
<reference key="3">
    <citation type="journal article" date="1981" name="Gene">
        <title>Comparison of the nucleotide sequence of cloned DNA coding for an apolipoprotein (apo VLDL-II) from avian blood and the amino acid sequence of an egg-yolk protein (apovitellenin I): equivalence of the two sequences.</title>
        <authorList>
            <person name="Dugaiczyk A."/>
            <person name="Inglis A.S."/>
            <person name="Strike P.M."/>
            <person name="Burley R.W."/>
            <person name="Beattie W.G."/>
            <person name="Chan L."/>
        </authorList>
    </citation>
    <scope>NUCLEOTIDE SEQUENCE [GENOMIC DNA]</scope>
    <scope>PARTIAL PROTEIN SEQUENCE</scope>
</reference>
<reference key="4">
    <citation type="journal article" date="1989" name="J. Biol. Chem.">
        <title>Detection and characterization of degradative intermediates of avian apo very low density lipoprotein II mRNA present in estrogen-treated birds and following destabilization by hormone withdrawal.</title>
        <authorList>
            <person name="Cochrane A."/>
            <person name="Deeley R.G."/>
        </authorList>
    </citation>
    <scope>NUCLEOTIDE SEQUENCE [MRNA]</scope>
</reference>
<reference key="5">
    <citation type="journal article" date="1980" name="J. Biol. Chem.">
        <title>Amino acid sequence of the signal peptide of apoVLDL-II, a major apoprotein in avian very low density lipoproteins.</title>
        <authorList>
            <person name="Chan L."/>
            <person name="Bradley W.A."/>
            <person name="Means A.R."/>
        </authorList>
    </citation>
    <scope>PROTEIN SEQUENCE OF 1-51 (PRECURSOR PROTEIN)</scope>
</reference>
<reference key="6">
    <citation type="journal article" date="1976" name="Aust. J. Biol. Sci.">
        <title>Primary structure of apovitellenin I from hen egg yolk and its comparison with emu apovitellenin I.</title>
        <authorList>
            <person name="Dopheide T.A.A."/>
            <person name="Inglis A.S."/>
        </authorList>
    </citation>
    <scope>PROTEIN SEQUENCE OF 25-106</scope>
    <source>
        <tissue>Egg yolk</tissue>
    </source>
</reference>
<reference key="7">
    <citation type="journal article" date="1977" name="J. Biol. Chem.">
        <title>Amino acid sequence of a major apoprotein from hen plasma very low density lipoproteins.</title>
        <authorList>
            <person name="Jackson R.L."/>
            <person name="Lin H.-Y."/>
            <person name="Chan L."/>
            <person name="Means A.R."/>
        </authorList>
    </citation>
    <scope>PROTEIN SEQUENCE OF 25-106</scope>
    <source>
        <tissue>Plasma</tissue>
    </source>
</reference>
<sequence>MVQYRALVIAVILLLSTTVPEVHSKSIIDRERRDWLVIPDAAAAYIYEAVNKVSPRAGQFLLDVSQTTVVSGIRNFLINETARLTKLAEQLMEKIKNLCYTKVLGY</sequence>
<organism>
    <name type="scientific">Gallus gallus</name>
    <name type="common">Chicken</name>
    <dbReference type="NCBI Taxonomy" id="9031"/>
    <lineage>
        <taxon>Eukaryota</taxon>
        <taxon>Metazoa</taxon>
        <taxon>Chordata</taxon>
        <taxon>Craniata</taxon>
        <taxon>Vertebrata</taxon>
        <taxon>Euteleostomi</taxon>
        <taxon>Archelosauria</taxon>
        <taxon>Archosauria</taxon>
        <taxon>Dinosauria</taxon>
        <taxon>Saurischia</taxon>
        <taxon>Theropoda</taxon>
        <taxon>Coelurosauria</taxon>
        <taxon>Aves</taxon>
        <taxon>Neognathae</taxon>
        <taxon>Galloanserae</taxon>
        <taxon>Galliformes</taxon>
        <taxon>Phasianidae</taxon>
        <taxon>Phasianinae</taxon>
        <taxon>Gallus</taxon>
    </lineage>
</organism>
<name>APOV1_CHICK</name>
<feature type="signal peptide" evidence="1 2 3">
    <location>
        <begin position="1"/>
        <end position="24"/>
    </location>
</feature>
<feature type="chain" id="PRO_0000002064" description="Apovitellenin-1">
    <location>
        <begin position="25"/>
        <end position="106"/>
    </location>
</feature>
<feature type="disulfide bond" description="Interchain" evidence="1">
    <location>
        <position position="99"/>
    </location>
</feature>
<feature type="sequence conflict" description="In Ref. 5; AA sequence." evidence="4" ref="5">
    <location>
        <position position="2"/>
    </location>
</feature>
<feature type="sequence conflict" description="In Ref. 5; AA sequence." evidence="4" ref="5">
    <original>H</original>
    <variation>C</variation>
    <location>
        <position position="23"/>
    </location>
</feature>
<feature type="sequence conflict" description="In Ref. 4; AAA48938." evidence="4" ref="4">
    <original>TV</original>
    <variation>NS</variation>
    <location>
        <begin position="68"/>
        <end position="69"/>
    </location>
</feature>
<feature type="sequence conflict" description="In Ref. 6; AA sequence." evidence="4" ref="6">
    <original>SGI</original>
    <variation>IGS</variation>
    <location>
        <begin position="71"/>
        <end position="73"/>
    </location>
</feature>
<feature type="sequence conflict" description="In Ref. 6; AA sequence." evidence="4" ref="6">
    <original>LM</original>
    <variation>ML</variation>
    <location>
        <begin position="91"/>
        <end position="92"/>
    </location>
</feature>